<name>HIS4_LACP7</name>
<organism>
    <name type="scientific">Lachnoclostridium phytofermentans (strain ATCC 700394 / DSM 18823 / ISDg)</name>
    <name type="common">Clostridium phytofermentans</name>
    <dbReference type="NCBI Taxonomy" id="357809"/>
    <lineage>
        <taxon>Bacteria</taxon>
        <taxon>Bacillati</taxon>
        <taxon>Bacillota</taxon>
        <taxon>Clostridia</taxon>
        <taxon>Lachnospirales</taxon>
        <taxon>Lachnospiraceae</taxon>
    </lineage>
</organism>
<protein>
    <recommendedName>
        <fullName evidence="1">1-(5-phosphoribosyl)-5-[(5-phosphoribosylamino)methylideneamino] imidazole-4-carboxamide isomerase</fullName>
        <ecNumber evidence="1">5.3.1.16</ecNumber>
    </recommendedName>
    <alternativeName>
        <fullName evidence="1">Phosphoribosylformimino-5-aminoimidazole carboxamide ribotide isomerase</fullName>
    </alternativeName>
</protein>
<sequence>MRLYPAIDIRNGQCVRLRQGQFHDVEVYSHVPANIAMQWEGQGASYIHIVDLDGALAGHSVNDEVIKEIVQTVSVPIQVGGGIRTIQDIEHKLNLGVNRVIIGTKAVENPQFVKEIISTFGADKIVIGIDAKNGMVAIEGWEKVSNYNAVSLALEMKELGVSTIVYTDISKDGMLQGPNIEHTKEMVDLTGLNIIASGGVSSMKDLEELDKIKVSGVIIGKALYERRIELENATRLFEQ</sequence>
<feature type="chain" id="PRO_1000084095" description="1-(5-phosphoribosyl)-5-[(5-phosphoribosylamino)methylideneamino] imidazole-4-carboxamide isomerase">
    <location>
        <begin position="1"/>
        <end position="239"/>
    </location>
</feature>
<feature type="active site" description="Proton acceptor" evidence="1">
    <location>
        <position position="8"/>
    </location>
</feature>
<feature type="active site" description="Proton donor" evidence="1">
    <location>
        <position position="130"/>
    </location>
</feature>
<evidence type="ECO:0000255" key="1">
    <source>
        <dbReference type="HAMAP-Rule" id="MF_01014"/>
    </source>
</evidence>
<keyword id="KW-0028">Amino-acid biosynthesis</keyword>
<keyword id="KW-0963">Cytoplasm</keyword>
<keyword id="KW-0368">Histidine biosynthesis</keyword>
<keyword id="KW-0413">Isomerase</keyword>
<keyword id="KW-1185">Reference proteome</keyword>
<dbReference type="EC" id="5.3.1.16" evidence="1"/>
<dbReference type="EMBL" id="CP000885">
    <property type="protein sequence ID" value="ABX43143.1"/>
    <property type="molecule type" value="Genomic_DNA"/>
</dbReference>
<dbReference type="RefSeq" id="WP_012200794.1">
    <property type="nucleotide sequence ID" value="NC_010001.1"/>
</dbReference>
<dbReference type="SMR" id="A9KNX3"/>
<dbReference type="STRING" id="357809.Cphy_2783"/>
<dbReference type="KEGG" id="cpy:Cphy_2783"/>
<dbReference type="eggNOG" id="COG0106">
    <property type="taxonomic scope" value="Bacteria"/>
</dbReference>
<dbReference type="HOGENOM" id="CLU_048577_1_1_9"/>
<dbReference type="OrthoDB" id="9807749at2"/>
<dbReference type="UniPathway" id="UPA00031">
    <property type="reaction ID" value="UER00009"/>
</dbReference>
<dbReference type="Proteomes" id="UP000000370">
    <property type="component" value="Chromosome"/>
</dbReference>
<dbReference type="GO" id="GO:0005737">
    <property type="term" value="C:cytoplasm"/>
    <property type="evidence" value="ECO:0007669"/>
    <property type="project" value="UniProtKB-SubCell"/>
</dbReference>
<dbReference type="GO" id="GO:0003949">
    <property type="term" value="F:1-(5-phosphoribosyl)-5-[(5-phosphoribosylamino)methylideneamino]imidazole-4-carboxamide isomerase activity"/>
    <property type="evidence" value="ECO:0007669"/>
    <property type="project" value="UniProtKB-UniRule"/>
</dbReference>
<dbReference type="GO" id="GO:0000105">
    <property type="term" value="P:L-histidine biosynthetic process"/>
    <property type="evidence" value="ECO:0007669"/>
    <property type="project" value="UniProtKB-UniRule"/>
</dbReference>
<dbReference type="GO" id="GO:0000162">
    <property type="term" value="P:L-tryptophan biosynthetic process"/>
    <property type="evidence" value="ECO:0007669"/>
    <property type="project" value="TreeGrafter"/>
</dbReference>
<dbReference type="CDD" id="cd04732">
    <property type="entry name" value="HisA"/>
    <property type="match status" value="1"/>
</dbReference>
<dbReference type="FunFam" id="3.20.20.70:FF:000009">
    <property type="entry name" value="1-(5-phosphoribosyl)-5-[(5-phosphoribosylamino)methylideneamino] imidazole-4-carboxamide isomerase"/>
    <property type="match status" value="1"/>
</dbReference>
<dbReference type="Gene3D" id="3.20.20.70">
    <property type="entry name" value="Aldolase class I"/>
    <property type="match status" value="1"/>
</dbReference>
<dbReference type="HAMAP" id="MF_01014">
    <property type="entry name" value="HisA"/>
    <property type="match status" value="1"/>
</dbReference>
<dbReference type="InterPro" id="IPR013785">
    <property type="entry name" value="Aldolase_TIM"/>
</dbReference>
<dbReference type="InterPro" id="IPR006062">
    <property type="entry name" value="His_biosynth"/>
</dbReference>
<dbReference type="InterPro" id="IPR006063">
    <property type="entry name" value="HisA_bact_arch"/>
</dbReference>
<dbReference type="InterPro" id="IPR044524">
    <property type="entry name" value="Isoase_HisA-like"/>
</dbReference>
<dbReference type="InterPro" id="IPR023016">
    <property type="entry name" value="Isoase_HisA-like_bact"/>
</dbReference>
<dbReference type="InterPro" id="IPR011060">
    <property type="entry name" value="RibuloseP-bd_barrel"/>
</dbReference>
<dbReference type="NCBIfam" id="TIGR00007">
    <property type="entry name" value="1-(5-phosphoribosyl)-5-[(5-phosphoribosylamino)methylideneamino]imidazole-4-carboxamide isomerase"/>
    <property type="match status" value="1"/>
</dbReference>
<dbReference type="NCBIfam" id="NF010112">
    <property type="entry name" value="PRK13585.1"/>
    <property type="match status" value="1"/>
</dbReference>
<dbReference type="PANTHER" id="PTHR43090">
    <property type="entry name" value="1-(5-PHOSPHORIBOSYL)-5-[(5-PHOSPHORIBOSYLAMINO)METHYLIDENEAMINO] IMIDAZOLE-4-CARBOXAMIDE ISOMERASE"/>
    <property type="match status" value="1"/>
</dbReference>
<dbReference type="PANTHER" id="PTHR43090:SF2">
    <property type="entry name" value="1-(5-PHOSPHORIBOSYL)-5-[(5-PHOSPHORIBOSYLAMINO)METHYLIDENEAMINO] IMIDAZOLE-4-CARBOXAMIDE ISOMERASE"/>
    <property type="match status" value="1"/>
</dbReference>
<dbReference type="Pfam" id="PF00977">
    <property type="entry name" value="His_biosynth"/>
    <property type="match status" value="1"/>
</dbReference>
<dbReference type="SUPFAM" id="SSF51366">
    <property type="entry name" value="Ribulose-phoshate binding barrel"/>
    <property type="match status" value="1"/>
</dbReference>
<gene>
    <name evidence="1" type="primary">hisA</name>
    <name type="ordered locus">Cphy_2783</name>
</gene>
<comment type="catalytic activity">
    <reaction evidence="1">
        <text>1-(5-phospho-beta-D-ribosyl)-5-[(5-phospho-beta-D-ribosylamino)methylideneamino]imidazole-4-carboxamide = 5-[(5-phospho-1-deoxy-D-ribulos-1-ylimino)methylamino]-1-(5-phospho-beta-D-ribosyl)imidazole-4-carboxamide</text>
        <dbReference type="Rhea" id="RHEA:15469"/>
        <dbReference type="ChEBI" id="CHEBI:58435"/>
        <dbReference type="ChEBI" id="CHEBI:58525"/>
        <dbReference type="EC" id="5.3.1.16"/>
    </reaction>
</comment>
<comment type="pathway">
    <text evidence="1">Amino-acid biosynthesis; L-histidine biosynthesis; L-histidine from 5-phospho-alpha-D-ribose 1-diphosphate: step 4/9.</text>
</comment>
<comment type="subcellular location">
    <subcellularLocation>
        <location evidence="1">Cytoplasm</location>
    </subcellularLocation>
</comment>
<comment type="similarity">
    <text evidence="1">Belongs to the HisA/HisF family.</text>
</comment>
<accession>A9KNX3</accession>
<reference key="1">
    <citation type="submission" date="2007-11" db="EMBL/GenBank/DDBJ databases">
        <title>Complete genome sequence of Clostridium phytofermentans ISDg.</title>
        <authorList>
            <person name="Leschine S.B."/>
            <person name="Warnick T.A."/>
            <person name="Blanchard J.L."/>
            <person name="Schnell D.J."/>
            <person name="Petit E.L."/>
            <person name="LaTouf W.G."/>
            <person name="Copeland A."/>
            <person name="Lucas S."/>
            <person name="Lapidus A."/>
            <person name="Barry K."/>
            <person name="Glavina del Rio T."/>
            <person name="Dalin E."/>
            <person name="Tice H."/>
            <person name="Pitluck S."/>
            <person name="Kiss H."/>
            <person name="Brettin T."/>
            <person name="Bruce D."/>
            <person name="Detter J.C."/>
            <person name="Han C."/>
            <person name="Kuske C."/>
            <person name="Schmutz J."/>
            <person name="Larimer F."/>
            <person name="Land M."/>
            <person name="Hauser L."/>
            <person name="Kyrpides N."/>
            <person name="Kim E.A."/>
            <person name="Richardson P."/>
        </authorList>
    </citation>
    <scope>NUCLEOTIDE SEQUENCE [LARGE SCALE GENOMIC DNA]</scope>
    <source>
        <strain>ATCC 700394 / DSM 18823 / ISDg</strain>
    </source>
</reference>
<proteinExistence type="inferred from homology"/>